<proteinExistence type="evidence at protein level"/>
<gene>
    <name evidence="8" type="primary">espI</name>
    <name type="ordered locus">Rv3876</name>
</gene>
<accession>P9WJC5</accession>
<accession>L0TH05</accession>
<accession>O69740</accession>
<accession>Q7D4P3</accession>
<sequence>MAADYDKLFRPHEGMEAPDDMAAQPFFDPSASFPPAPASANLPKPNGQTPPPTSDDLSERFVSAPPPPPPPPPPPPPTPMPIAAGEPPSPEPAASKPPTPPMPIAGPEPAPPKPPTPPMPIAGPEPAPPKPPTPPMPIAGPAPTPTESQLAPPRPPTPQTPTGAPQQPESPAPHVPSHGPHQPRRTAPAPPWAKMPIGEPPPAPSRPSASPAEPPTRPAPQHSRRARRGHRYRTDTERNVGKVATGPSIQARLRAEEASGAQLAPGTEPSPAPLGQPRSYLAPPTRPAPTEPPPSPSPQRNSGRRAERRVHPDLAAQHAAAQPDSITAATTGGRRRKRAAPDLDATQKSLRPAAKGPKVKKVKPQKPKATKPPKVVSQRGWRHWVHALTRINLGLSPDEKYELDLHARVRRNPRGSYQIAVVGLKGGAGKTTLTAALGSTLAQVRADRILALDADPGAGNLADRVGRQSGATIADVLAEKELSHYNDIRAHTSVNAVNLEVLPAPEYSSAQRALSDADWHFIADPASRFYNLVLADCGAGFFDPLTRGVLSTVSGVVVVASVSIDGAQQASVALDWLRNNGYQDLASRACVVINHIMPGEPNVAVKDLVRHFEQQVQPGRVVVMPWDRHIAAGTEISLDLLDPIYKRKVLELAAALSDDFERAGRR</sequence>
<keyword id="KW-0067">ATP-binding</keyword>
<keyword id="KW-0547">Nucleotide-binding</keyword>
<keyword id="KW-1185">Reference proteome</keyword>
<reference key="1">
    <citation type="journal article" date="1998" name="Nature">
        <title>Deciphering the biology of Mycobacterium tuberculosis from the complete genome sequence.</title>
        <authorList>
            <person name="Cole S.T."/>
            <person name="Brosch R."/>
            <person name="Parkhill J."/>
            <person name="Garnier T."/>
            <person name="Churcher C.M."/>
            <person name="Harris D.E."/>
            <person name="Gordon S.V."/>
            <person name="Eiglmeier K."/>
            <person name="Gas S."/>
            <person name="Barry C.E. III"/>
            <person name="Tekaia F."/>
            <person name="Badcock K."/>
            <person name="Basham D."/>
            <person name="Brown D."/>
            <person name="Chillingworth T."/>
            <person name="Connor R."/>
            <person name="Davies R.M."/>
            <person name="Devlin K."/>
            <person name="Feltwell T."/>
            <person name="Gentles S."/>
            <person name="Hamlin N."/>
            <person name="Holroyd S."/>
            <person name="Hornsby T."/>
            <person name="Jagels K."/>
            <person name="Krogh A."/>
            <person name="McLean J."/>
            <person name="Moule S."/>
            <person name="Murphy L.D."/>
            <person name="Oliver S."/>
            <person name="Osborne J."/>
            <person name="Quail M.A."/>
            <person name="Rajandream M.A."/>
            <person name="Rogers J."/>
            <person name="Rutter S."/>
            <person name="Seeger K."/>
            <person name="Skelton S."/>
            <person name="Squares S."/>
            <person name="Squares R."/>
            <person name="Sulston J.E."/>
            <person name="Taylor K."/>
            <person name="Whitehead S."/>
            <person name="Barrell B.G."/>
        </authorList>
    </citation>
    <scope>NUCLEOTIDE SEQUENCE [LARGE SCALE GENOMIC DNA]</scope>
    <source>
        <strain>ATCC 25618 / H37Rv</strain>
    </source>
</reference>
<reference key="2">
    <citation type="journal article" date="2003" name="Proc. Natl. Acad. Sci. U.S.A.">
        <title>The primary mechanism of attenuation of bacillus Calmette-Guerin is a loss of secreted lytic function required for invasion of lung interstitial tissue.</title>
        <authorList>
            <person name="Hsu T."/>
            <person name="Hingley-Wilson S.M."/>
            <person name="Chen B."/>
            <person name="Chen M."/>
            <person name="Dai A.Z."/>
            <person name="Morin P.M."/>
            <person name="Marks C.B."/>
            <person name="Padiyar J."/>
            <person name="Goulding C."/>
            <person name="Gingery M."/>
            <person name="Eisenberg D."/>
            <person name="Russell R.G."/>
            <person name="Derrick S.C."/>
            <person name="Collins F.M."/>
            <person name="Morris S.L."/>
            <person name="King C.H."/>
            <person name="Jacobs W.R. Jr."/>
        </authorList>
    </citation>
    <scope>FUNCTION</scope>
    <scope>DISRUPTION PHENOTYPE</scope>
    <source>
        <strain>ATCC 25618 / H37Rv</strain>
    </source>
</reference>
<reference key="3">
    <citation type="journal article" date="2004" name="Mol. Microbiol.">
        <title>Individual RD1-region genes are required for export of ESAT-6/CFP-10 and for virulence of Mycobacterium tuberculosis.</title>
        <authorList>
            <person name="Guinn K.M."/>
            <person name="Hickey M.J."/>
            <person name="Mathur S.K."/>
            <person name="Zakel K.L."/>
            <person name="Grotzke J.E."/>
            <person name="Lewinsohn D.M."/>
            <person name="Smith S."/>
            <person name="Sherman D.R."/>
        </authorList>
    </citation>
    <scope>DISRUPTION PHENOTYPE</scope>
    <source>
        <strain>ATCC 25618 / H37Rv</strain>
    </source>
</reference>
<reference key="4">
    <citation type="journal article" date="2006" name="Infect. Immun.">
        <title>Dissection of ESAT-6 system 1 of Mycobacterium tuberculosis and impact on immunogenicity and virulence.</title>
        <authorList>
            <person name="Brodin P."/>
            <person name="Majlessi L."/>
            <person name="Marsollier L."/>
            <person name="de Jonge M.I."/>
            <person name="Bottai D."/>
            <person name="Demangel C."/>
            <person name="Hinds J."/>
            <person name="Neyrolles O."/>
            <person name="Butcher P.D."/>
            <person name="Leclerc C."/>
            <person name="Cole S.T."/>
            <person name="Brosch R."/>
        </authorList>
    </citation>
    <scope>DISRUPTION PHENOTYPE</scope>
</reference>
<reference key="5">
    <citation type="journal article" date="2009" name="PLoS Pathog.">
        <title>Systematic genetic nomenclature for type VII secretion systems.</title>
        <authorList>
            <person name="Bitter W."/>
            <person name="Houben E.N."/>
            <person name="Bottai D."/>
            <person name="Brodin P."/>
            <person name="Brown E.J."/>
            <person name="Cox J.S."/>
            <person name="Derbyshire K."/>
            <person name="Fortune S.M."/>
            <person name="Gao L.Y."/>
            <person name="Liu J."/>
            <person name="Gey van Pittius N.C."/>
            <person name="Pym A.S."/>
            <person name="Rubin E.J."/>
            <person name="Sherman D.R."/>
            <person name="Cole S.T."/>
            <person name="Brosch R."/>
        </authorList>
    </citation>
    <scope>GENE NAME</scope>
</reference>
<reference key="6">
    <citation type="journal article" date="2010" name="J. Bacteriol.">
        <title>Conservation of structure and protein-protein interactions mediated by the secreted mycobacterial proteins EsxA, EsxB, and EspA.</title>
        <authorList>
            <person name="Callahan B."/>
            <person name="Nguyen K."/>
            <person name="Collins A."/>
            <person name="Valdes K."/>
            <person name="Caplow M."/>
            <person name="Crossman D.K."/>
            <person name="Steyn A.J."/>
            <person name="Eisele L."/>
            <person name="Derbyshire K.M."/>
        </authorList>
    </citation>
    <scope>SUBUNIT</scope>
    <source>
        <strain>ATCC 25618 / H37Rv</strain>
    </source>
</reference>
<reference key="7">
    <citation type="journal article" date="2011" name="Mol. Cell. Proteomics">
        <title>Proteogenomic analysis of Mycobacterium tuberculosis by high resolution mass spectrometry.</title>
        <authorList>
            <person name="Kelkar D.S."/>
            <person name="Kumar D."/>
            <person name="Kumar P."/>
            <person name="Balakrishnan L."/>
            <person name="Muthusamy B."/>
            <person name="Yadav A.K."/>
            <person name="Shrivastava P."/>
            <person name="Marimuthu A."/>
            <person name="Anand S."/>
            <person name="Sundaram H."/>
            <person name="Kingsbury R."/>
            <person name="Harsha H.C."/>
            <person name="Nair B."/>
            <person name="Prasad T.S."/>
            <person name="Chauhan D.S."/>
            <person name="Katoch K."/>
            <person name="Katoch V.M."/>
            <person name="Kumar P."/>
            <person name="Chaerkady R."/>
            <person name="Ramachandran S."/>
            <person name="Dash D."/>
            <person name="Pandey A."/>
        </authorList>
    </citation>
    <scope>IDENTIFICATION BY MASS SPECTROMETRY [LARGE SCALE ANALYSIS]</scope>
    <source>
        <strain>ATCC 25618 / H37Rv</strain>
    </source>
</reference>
<reference key="8">
    <citation type="journal article" date="2014" name="Mol. Microbiol.">
        <title>EspI regulates the ESX-1 secretion system in response to ATP levels in Mycobacterium tuberculosis.</title>
        <authorList>
            <person name="Zhang M."/>
            <person name="Chen J.M."/>
            <person name="Sala C."/>
            <person name="Rybniker J."/>
            <person name="Dhar N."/>
            <person name="Cole S.T."/>
        </authorList>
    </citation>
    <scope>FUNCTION</scope>
    <scope>ATP-BINDING</scope>
    <scope>DISRUPTION PHENOTYPE</scope>
    <scope>MUTAGENESIS OF LYS-425</scope>
    <source>
        <strain>ATCC 35801 / TMC 107 / Erdman</strain>
        <strain>H37Rv</strain>
    </source>
</reference>
<reference key="9">
    <citation type="journal article" date="2016" name="Protein Expr. Purif.">
        <title>Recombinant preparation and functional studies of EspI ATP binding domain from Mycobacterium tuberculosis.</title>
        <authorList>
            <person name="Chen H."/>
            <person name="Wang H."/>
            <person name="Sun T."/>
            <person name="Tian S."/>
            <person name="Lin D."/>
            <person name="Guo C."/>
        </authorList>
    </citation>
    <scope>ATP-BINDING</scope>
    <scope>MUTAGENESIS OF LYS-425</scope>
</reference>
<evidence type="ECO:0000256" key="1">
    <source>
        <dbReference type="SAM" id="MobiDB-lite"/>
    </source>
</evidence>
<evidence type="ECO:0000269" key="2">
    <source>
    </source>
</evidence>
<evidence type="ECO:0000269" key="3">
    <source>
    </source>
</evidence>
<evidence type="ECO:0000269" key="4">
    <source>
    </source>
</evidence>
<evidence type="ECO:0000269" key="5">
    <source>
    </source>
</evidence>
<evidence type="ECO:0000269" key="6">
    <source>
    </source>
</evidence>
<evidence type="ECO:0000269" key="7">
    <source>
    </source>
</evidence>
<evidence type="ECO:0000303" key="8">
    <source>
    </source>
</evidence>
<evidence type="ECO:0000305" key="9"/>
<evidence type="ECO:0000305" key="10">
    <source>
    </source>
</evidence>
<evidence type="ECO:0000305" key="11">
    <source>
    </source>
</evidence>
<evidence type="ECO:0000305" key="12">
    <source>
    </source>
</evidence>
<protein>
    <recommendedName>
        <fullName evidence="9">ESX-1 secretion-associated protein EspI</fullName>
    </recommendedName>
</protein>
<feature type="chain" id="PRO_0000394147" description="ESX-1 secretion-associated protein EspI">
    <location>
        <begin position="1"/>
        <end position="666"/>
    </location>
</feature>
<feature type="region of interest" description="Disordered" evidence="1">
    <location>
        <begin position="1"/>
        <end position="378"/>
    </location>
</feature>
<feature type="compositionally biased region" description="Basic and acidic residues" evidence="1">
    <location>
        <begin position="1"/>
        <end position="15"/>
    </location>
</feature>
<feature type="compositionally biased region" description="Low complexity" evidence="1">
    <location>
        <begin position="22"/>
        <end position="31"/>
    </location>
</feature>
<feature type="compositionally biased region" description="Pro residues" evidence="1">
    <location>
        <begin position="64"/>
        <end position="80"/>
    </location>
</feature>
<feature type="compositionally biased region" description="Pro residues" evidence="1">
    <location>
        <begin position="87"/>
        <end position="144"/>
    </location>
</feature>
<feature type="compositionally biased region" description="Pro residues" evidence="1">
    <location>
        <begin position="188"/>
        <end position="205"/>
    </location>
</feature>
<feature type="compositionally biased region" description="Basic residues" evidence="1">
    <location>
        <begin position="222"/>
        <end position="231"/>
    </location>
</feature>
<feature type="compositionally biased region" description="Pro residues" evidence="1">
    <location>
        <begin position="284"/>
        <end position="297"/>
    </location>
</feature>
<feature type="compositionally biased region" description="Basic residues" evidence="1">
    <location>
        <begin position="357"/>
        <end position="371"/>
    </location>
</feature>
<feature type="binding site" evidence="12">
    <location>
        <begin position="424"/>
        <end position="431"/>
    </location>
    <ligand>
        <name>ATP</name>
        <dbReference type="ChEBI" id="CHEBI:30616"/>
    </ligand>
</feature>
<feature type="mutagenesis site" description="Does not block ESX-1-mediated secretion during ATP depletion. Lack of ATP-binding." evidence="6 7">
    <original>K</original>
    <variation>Q</variation>
    <location>
        <position position="425"/>
    </location>
</feature>
<name>ESPI_MYCTU</name>
<comment type="function">
    <text evidence="6 10">Required to repress ESX-1-mediated secretion under low ATP conditions. This function requires the ATP-binding motif.</text>
</comment>
<comment type="subunit">
    <text evidence="5">Residues 1-81 interact with EsxB while residues 35-186 interact with an artificial EsxB-EsxA heterodimer (PubMed:19854905).</text>
</comment>
<comment type="disruption phenotype">
    <text evidence="2 3 4 6 11">Double espI-eccD1 mutants abolish EsxA and EsxB secretion, but not their expression (PubMed:14557547). One group has shown no growth in the human macrophage-like cell line THP-1, no cytotoxicity, attenutated infection in mice, nearly 100-fold less bacteria in lung and spleen of C57BL/6; Brodin et al., attribute this result to polar effects on the downstream gene (PubMed:14756778, PubMed:16368961). Another group has shown that inactivation does not abolish EsxA (ESAT-6) secretion, EsxA-specific immunogenicity or virulence (PubMed:16368961, PubMed:25039394).</text>
</comment>
<organism>
    <name type="scientific">Mycobacterium tuberculosis (strain ATCC 25618 / H37Rv)</name>
    <dbReference type="NCBI Taxonomy" id="83332"/>
    <lineage>
        <taxon>Bacteria</taxon>
        <taxon>Bacillati</taxon>
        <taxon>Actinomycetota</taxon>
        <taxon>Actinomycetes</taxon>
        <taxon>Mycobacteriales</taxon>
        <taxon>Mycobacteriaceae</taxon>
        <taxon>Mycobacterium</taxon>
        <taxon>Mycobacterium tuberculosis complex</taxon>
    </lineage>
</organism>
<dbReference type="EMBL" id="AL123456">
    <property type="protein sequence ID" value="CCP46705.1"/>
    <property type="molecule type" value="Genomic_DNA"/>
</dbReference>
<dbReference type="PIR" id="B70803">
    <property type="entry name" value="B70803"/>
</dbReference>
<dbReference type="RefSeq" id="NP_218393.1">
    <property type="nucleotide sequence ID" value="NC_000962.3"/>
</dbReference>
<dbReference type="RefSeq" id="WP_003909105.1">
    <property type="nucleotide sequence ID" value="NC_000962.3"/>
</dbReference>
<dbReference type="SMR" id="P9WJC5"/>
<dbReference type="FunCoup" id="P9WJC5">
    <property type="interactions" value="4"/>
</dbReference>
<dbReference type="IntAct" id="P9WJC5">
    <property type="interactions" value="1"/>
</dbReference>
<dbReference type="STRING" id="83332.Rv3876"/>
<dbReference type="PaxDb" id="83332-Rv3876"/>
<dbReference type="DNASU" id="886206"/>
<dbReference type="GeneID" id="886206"/>
<dbReference type="KEGG" id="mtu:Rv3876"/>
<dbReference type="KEGG" id="mtv:RVBD_3876"/>
<dbReference type="PATRIC" id="fig|83332.111.peg.4314"/>
<dbReference type="TubercuList" id="Rv3876"/>
<dbReference type="eggNOG" id="COG0455">
    <property type="taxonomic scope" value="Bacteria"/>
</dbReference>
<dbReference type="InParanoid" id="P9WJC5"/>
<dbReference type="OrthoDB" id="3204399at2"/>
<dbReference type="Proteomes" id="UP000001584">
    <property type="component" value="Chromosome"/>
</dbReference>
<dbReference type="GO" id="GO:0009898">
    <property type="term" value="C:cytoplasmic side of plasma membrane"/>
    <property type="evidence" value="ECO:0000318"/>
    <property type="project" value="GO_Central"/>
</dbReference>
<dbReference type="GO" id="GO:0005829">
    <property type="term" value="C:cytosol"/>
    <property type="evidence" value="ECO:0000318"/>
    <property type="project" value="GO_Central"/>
</dbReference>
<dbReference type="GO" id="GO:0005886">
    <property type="term" value="C:plasma membrane"/>
    <property type="evidence" value="ECO:0007005"/>
    <property type="project" value="MTBBASE"/>
</dbReference>
<dbReference type="GO" id="GO:0005524">
    <property type="term" value="F:ATP binding"/>
    <property type="evidence" value="ECO:0000318"/>
    <property type="project" value="GO_Central"/>
</dbReference>
<dbReference type="GO" id="GO:0016887">
    <property type="term" value="F:ATP hydrolysis activity"/>
    <property type="evidence" value="ECO:0000318"/>
    <property type="project" value="GO_Central"/>
</dbReference>
<dbReference type="GO" id="GO:0044315">
    <property type="term" value="P:protein secretion by the type VII secretion system"/>
    <property type="evidence" value="ECO:0000315"/>
    <property type="project" value="MTBBASE"/>
</dbReference>
<dbReference type="FunFam" id="3.40.50.300:FF:002904">
    <property type="entry name" value="Type VII secretion system ESX-1 associated protein EspI"/>
    <property type="match status" value="1"/>
</dbReference>
<dbReference type="Gene3D" id="3.40.50.300">
    <property type="entry name" value="P-loop containing nucleotide triphosphate hydrolases"/>
    <property type="match status" value="1"/>
</dbReference>
<dbReference type="InterPro" id="IPR002586">
    <property type="entry name" value="CobQ/CobB/MinD/ParA_Nub-bd_dom"/>
</dbReference>
<dbReference type="InterPro" id="IPR027417">
    <property type="entry name" value="P-loop_NTPase"/>
</dbReference>
<dbReference type="InterPro" id="IPR050625">
    <property type="entry name" value="ParA/MinD_ATPase"/>
</dbReference>
<dbReference type="PANTHER" id="PTHR43384:SF14">
    <property type="entry name" value="ESX-1 SECRETION-ASSOCIATED PROTEIN ESPI"/>
    <property type="match status" value="1"/>
</dbReference>
<dbReference type="PANTHER" id="PTHR43384">
    <property type="entry name" value="SEPTUM SITE-DETERMINING PROTEIN MIND HOMOLOG, CHLOROPLASTIC-RELATED"/>
    <property type="match status" value="1"/>
</dbReference>
<dbReference type="Pfam" id="PF01656">
    <property type="entry name" value="CbiA"/>
    <property type="match status" value="1"/>
</dbReference>
<dbReference type="SUPFAM" id="SSF52540">
    <property type="entry name" value="P-loop containing nucleoside triphosphate hydrolases"/>
    <property type="match status" value="1"/>
</dbReference>